<dbReference type="EMBL" id="AP006715">
    <property type="protein sequence ID" value="BAE92440.1"/>
    <property type="molecule type" value="Genomic_DNA"/>
</dbReference>
<dbReference type="RefSeq" id="YP_536997.1">
    <property type="nucleotide sequence ID" value="NC_007932.1"/>
</dbReference>
<dbReference type="SMR" id="Q1XDH1"/>
<dbReference type="GeneID" id="3978980"/>
<dbReference type="GO" id="GO:0009535">
    <property type="term" value="C:chloroplast thylakoid membrane"/>
    <property type="evidence" value="ECO:0007669"/>
    <property type="project" value="UniProtKB-SubCell"/>
</dbReference>
<dbReference type="GO" id="GO:0009539">
    <property type="term" value="C:photosystem II reaction center"/>
    <property type="evidence" value="ECO:0007669"/>
    <property type="project" value="InterPro"/>
</dbReference>
<dbReference type="GO" id="GO:0015979">
    <property type="term" value="P:photosynthesis"/>
    <property type="evidence" value="ECO:0007669"/>
    <property type="project" value="UniProtKB-UniRule"/>
</dbReference>
<dbReference type="GO" id="GO:0042549">
    <property type="term" value="P:photosystem II stabilization"/>
    <property type="evidence" value="ECO:0007669"/>
    <property type="project" value="InterPro"/>
</dbReference>
<dbReference type="Gene3D" id="1.10.287.740">
    <property type="entry name" value="Photosystem II PsbZ, reaction centre"/>
    <property type="match status" value="1"/>
</dbReference>
<dbReference type="HAMAP" id="MF_00644">
    <property type="entry name" value="PSII_PsbZ"/>
    <property type="match status" value="1"/>
</dbReference>
<dbReference type="InterPro" id="IPR002644">
    <property type="entry name" value="PSII_PsbZ"/>
</dbReference>
<dbReference type="InterPro" id="IPR036512">
    <property type="entry name" value="PSII_PsbZ_sf"/>
</dbReference>
<dbReference type="NCBIfam" id="TIGR03043">
    <property type="entry name" value="PS_II_psbZ"/>
    <property type="match status" value="1"/>
</dbReference>
<dbReference type="PANTHER" id="PTHR34971">
    <property type="entry name" value="PHOTOSYSTEM II REACTION CENTER PROTEIN Z"/>
    <property type="match status" value="1"/>
</dbReference>
<dbReference type="PANTHER" id="PTHR34971:SF2">
    <property type="entry name" value="PHOTOSYSTEM II REACTION CENTER PROTEIN Z"/>
    <property type="match status" value="1"/>
</dbReference>
<dbReference type="Pfam" id="PF01737">
    <property type="entry name" value="Ycf9"/>
    <property type="match status" value="1"/>
</dbReference>
<dbReference type="SUPFAM" id="SSF161055">
    <property type="entry name" value="PsbZ-like"/>
    <property type="match status" value="1"/>
</dbReference>
<geneLocation type="chloroplast"/>
<evidence type="ECO:0000255" key="1">
    <source>
        <dbReference type="HAMAP-Rule" id="MF_00644"/>
    </source>
</evidence>
<reference key="1">
    <citation type="submission" date="2003-11" db="EMBL/GenBank/DDBJ databases">
        <title>Whole genome sequence of Porphyra yezoensis chloroplast.</title>
        <authorList>
            <person name="Kunimoto M."/>
            <person name="Morishima K."/>
            <person name="Yoshikawa M."/>
            <person name="Fukuda S."/>
            <person name="Kobayashi T."/>
            <person name="Kobayashi M."/>
            <person name="Okazaki T."/>
            <person name="Ohara I."/>
            <person name="Nakayama I."/>
        </authorList>
    </citation>
    <scope>NUCLEOTIDE SEQUENCE [LARGE SCALE GENOMIC DNA]</scope>
    <source>
        <strain>U-51</strain>
    </source>
</reference>
<name>PSBZ_PYRYE</name>
<comment type="function">
    <text evidence="1">May control the interaction of photosystem II (PSII) cores with the light-harvesting antenna, regulates electron flow through the 2 photosystem reaction centers. PSII is a light-driven water plastoquinone oxidoreductase, using light energy to abstract electrons from H(2)O, generating a proton gradient subsequently used for ATP formation.</text>
</comment>
<comment type="subunit">
    <text evidence="1">PSII is composed of 1 copy each of membrane proteins PsbA, PsbB, PsbC, PsbD, PsbE, PsbF, PsbH, PsbI, PsbJ, PsbK, PsbL, PsbM, PsbT, PsbX, PsbY, PsbZ, Psb30/Ycf12, at least 3 peripheral proteins of the oxygen-evolving complex and a large number of cofactors. It forms dimeric complexes.</text>
</comment>
<comment type="subcellular location">
    <subcellularLocation>
        <location evidence="1">Plastid</location>
        <location evidence="1">Chloroplast thylakoid membrane</location>
        <topology evidence="1">Multi-pass membrane protein</topology>
    </subcellularLocation>
</comment>
<comment type="similarity">
    <text evidence="1">Belongs to the PsbZ family.</text>
</comment>
<feature type="chain" id="PRO_0000277244" description="Photosystem II reaction center protein Z">
    <location>
        <begin position="1"/>
        <end position="62"/>
    </location>
</feature>
<feature type="transmembrane region" description="Helical" evidence="1">
    <location>
        <begin position="8"/>
        <end position="28"/>
    </location>
</feature>
<feature type="transmembrane region" description="Helical" evidence="1">
    <location>
        <begin position="41"/>
        <end position="61"/>
    </location>
</feature>
<organism>
    <name type="scientific">Pyropia yezoensis</name>
    <name type="common">Susabi-nori</name>
    <name type="synonym">Porphyra yezoensis</name>
    <dbReference type="NCBI Taxonomy" id="2788"/>
    <lineage>
        <taxon>Eukaryota</taxon>
        <taxon>Rhodophyta</taxon>
        <taxon>Bangiophyceae</taxon>
        <taxon>Bangiales</taxon>
        <taxon>Bangiaceae</taxon>
        <taxon>Pyropia</taxon>
    </lineage>
</organism>
<sequence length="62" mass="6441">MIIAIQLLVLLLIALSTVLVVGVPVVLASPGQWEQSKGLIYTGAGLWTGLVIVTSLVNSLVV</sequence>
<accession>Q1XDH1</accession>
<gene>
    <name evidence="1" type="primary">psbZ</name>
</gene>
<keyword id="KW-0150">Chloroplast</keyword>
<keyword id="KW-0472">Membrane</keyword>
<keyword id="KW-0602">Photosynthesis</keyword>
<keyword id="KW-0604">Photosystem II</keyword>
<keyword id="KW-0934">Plastid</keyword>
<keyword id="KW-0674">Reaction center</keyword>
<keyword id="KW-0793">Thylakoid</keyword>
<keyword id="KW-0812">Transmembrane</keyword>
<keyword id="KW-1133">Transmembrane helix</keyword>
<protein>
    <recommendedName>
        <fullName evidence="1">Photosystem II reaction center protein Z</fullName>
        <shortName evidence="1">PSII-Z</shortName>
    </recommendedName>
</protein>
<proteinExistence type="inferred from homology"/>